<protein>
    <recommendedName>
        <fullName evidence="1">4-hydroxy-3-methylbut-2-en-1-yl diphosphate synthase (flavodoxin)</fullName>
        <ecNumber evidence="1">1.17.7.3</ecNumber>
    </recommendedName>
    <alternativeName>
        <fullName evidence="1">1-hydroxy-2-methyl-2-(E)-butenyl 4-diphosphate synthase</fullName>
    </alternativeName>
</protein>
<proteinExistence type="inferred from homology"/>
<evidence type="ECO:0000255" key="1">
    <source>
        <dbReference type="HAMAP-Rule" id="MF_00159"/>
    </source>
</evidence>
<sequence>MNEMTHRTKTRPVKVGNLTIGGNNELIIQSMTTTKTHDVEATVAEIKRLEEAGCQVVRVAVPDERAADAIADIKKQINIPLVADIHFDYRLALKAIEGGIDKVRINPGNIGRRHKVEAVVNAAKERGIPIRIGVNAGSLERHILEKYGYPTADGMVESALHHIKILEDLDFHDIIVSMKASDVNLAIEAYEKAARAFDYPLHLGITESGTLFAGTVKSAAGLGAILSKGIGNTLRISLSADPVEEVKVARELLKSFGLASNAATLISCPTCGRIEIDLISIANEVEEYISTLQVPIKVAVLGCAVNGPGEAREADIGIAGARGEGLLFRKGQVVRKVPEETMVEELKKEIDVIAAEMAAEREKEKETQEQ</sequence>
<name>ISPG_BACC2</name>
<accession>B7IYD0</accession>
<feature type="chain" id="PRO_1000123433" description="4-hydroxy-3-methylbut-2-en-1-yl diphosphate synthase (flavodoxin)">
    <location>
        <begin position="1"/>
        <end position="370"/>
    </location>
</feature>
<feature type="binding site" evidence="1">
    <location>
        <position position="268"/>
    </location>
    <ligand>
        <name>[4Fe-4S] cluster</name>
        <dbReference type="ChEBI" id="CHEBI:49883"/>
    </ligand>
</feature>
<feature type="binding site" evidence="1">
    <location>
        <position position="271"/>
    </location>
    <ligand>
        <name>[4Fe-4S] cluster</name>
        <dbReference type="ChEBI" id="CHEBI:49883"/>
    </ligand>
</feature>
<feature type="binding site" evidence="1">
    <location>
        <position position="303"/>
    </location>
    <ligand>
        <name>[4Fe-4S] cluster</name>
        <dbReference type="ChEBI" id="CHEBI:49883"/>
    </ligand>
</feature>
<feature type="binding site" evidence="1">
    <location>
        <position position="310"/>
    </location>
    <ligand>
        <name>[4Fe-4S] cluster</name>
        <dbReference type="ChEBI" id="CHEBI:49883"/>
    </ligand>
</feature>
<reference key="1">
    <citation type="submission" date="2008-10" db="EMBL/GenBank/DDBJ databases">
        <title>Genome sequence of Bacillus cereus G9842.</title>
        <authorList>
            <person name="Dodson R.J."/>
            <person name="Durkin A.S."/>
            <person name="Rosovitz M.J."/>
            <person name="Rasko D.A."/>
            <person name="Hoffmaster A."/>
            <person name="Ravel J."/>
            <person name="Sutton G."/>
        </authorList>
    </citation>
    <scope>NUCLEOTIDE SEQUENCE [LARGE SCALE GENOMIC DNA]</scope>
    <source>
        <strain>G9842</strain>
    </source>
</reference>
<keyword id="KW-0004">4Fe-4S</keyword>
<keyword id="KW-0408">Iron</keyword>
<keyword id="KW-0411">Iron-sulfur</keyword>
<keyword id="KW-0414">Isoprene biosynthesis</keyword>
<keyword id="KW-0479">Metal-binding</keyword>
<keyword id="KW-0560">Oxidoreductase</keyword>
<dbReference type="EC" id="1.17.7.3" evidence="1"/>
<dbReference type="EMBL" id="CP001186">
    <property type="protein sequence ID" value="ACK97629.1"/>
    <property type="molecule type" value="Genomic_DNA"/>
</dbReference>
<dbReference type="SMR" id="B7IYD0"/>
<dbReference type="KEGG" id="bcg:BCG9842_B0840"/>
<dbReference type="HOGENOM" id="CLU_042258_0_0_9"/>
<dbReference type="UniPathway" id="UPA00056">
    <property type="reaction ID" value="UER00096"/>
</dbReference>
<dbReference type="Proteomes" id="UP000006744">
    <property type="component" value="Chromosome"/>
</dbReference>
<dbReference type="GO" id="GO:0051539">
    <property type="term" value="F:4 iron, 4 sulfur cluster binding"/>
    <property type="evidence" value="ECO:0007669"/>
    <property type="project" value="UniProtKB-UniRule"/>
</dbReference>
<dbReference type="GO" id="GO:0046429">
    <property type="term" value="F:4-hydroxy-3-methylbut-2-en-1-yl diphosphate synthase activity (ferredoxin)"/>
    <property type="evidence" value="ECO:0007669"/>
    <property type="project" value="UniProtKB-UniRule"/>
</dbReference>
<dbReference type="GO" id="GO:0141197">
    <property type="term" value="F:4-hydroxy-3-methylbut-2-enyl-diphosphate synthase activity (flavodoxin)"/>
    <property type="evidence" value="ECO:0007669"/>
    <property type="project" value="UniProtKB-EC"/>
</dbReference>
<dbReference type="GO" id="GO:0005506">
    <property type="term" value="F:iron ion binding"/>
    <property type="evidence" value="ECO:0007669"/>
    <property type="project" value="InterPro"/>
</dbReference>
<dbReference type="GO" id="GO:0019288">
    <property type="term" value="P:isopentenyl diphosphate biosynthetic process, methylerythritol 4-phosphate pathway"/>
    <property type="evidence" value="ECO:0007669"/>
    <property type="project" value="UniProtKB-UniRule"/>
</dbReference>
<dbReference type="GO" id="GO:0016114">
    <property type="term" value="P:terpenoid biosynthetic process"/>
    <property type="evidence" value="ECO:0007669"/>
    <property type="project" value="InterPro"/>
</dbReference>
<dbReference type="FunFam" id="3.20.20.20:FF:000001">
    <property type="entry name" value="4-hydroxy-3-methylbut-2-en-1-yl diphosphate synthase (flavodoxin)"/>
    <property type="match status" value="1"/>
</dbReference>
<dbReference type="FunFam" id="3.30.413.10:FF:000005">
    <property type="entry name" value="4-hydroxy-3-methylbut-2-en-1-yl diphosphate synthase (flavodoxin)"/>
    <property type="match status" value="1"/>
</dbReference>
<dbReference type="Gene3D" id="3.20.20.20">
    <property type="entry name" value="Dihydropteroate synthase-like"/>
    <property type="match status" value="1"/>
</dbReference>
<dbReference type="Gene3D" id="3.30.413.10">
    <property type="entry name" value="Sulfite Reductase Hemoprotein, domain 1"/>
    <property type="match status" value="1"/>
</dbReference>
<dbReference type="HAMAP" id="MF_00159">
    <property type="entry name" value="IspG"/>
    <property type="match status" value="1"/>
</dbReference>
<dbReference type="InterPro" id="IPR011005">
    <property type="entry name" value="Dihydropteroate_synth-like_sf"/>
</dbReference>
<dbReference type="InterPro" id="IPR016425">
    <property type="entry name" value="IspG_bac"/>
</dbReference>
<dbReference type="InterPro" id="IPR004588">
    <property type="entry name" value="IspG_bac-typ"/>
</dbReference>
<dbReference type="InterPro" id="IPR045854">
    <property type="entry name" value="NO2/SO3_Rdtase_4Fe4S_sf"/>
</dbReference>
<dbReference type="NCBIfam" id="TIGR00612">
    <property type="entry name" value="ispG_gcpE"/>
    <property type="match status" value="1"/>
</dbReference>
<dbReference type="NCBIfam" id="NF001540">
    <property type="entry name" value="PRK00366.1"/>
    <property type="match status" value="1"/>
</dbReference>
<dbReference type="PANTHER" id="PTHR30454">
    <property type="entry name" value="4-HYDROXY-3-METHYLBUT-2-EN-1-YL DIPHOSPHATE SYNTHASE"/>
    <property type="match status" value="1"/>
</dbReference>
<dbReference type="PANTHER" id="PTHR30454:SF0">
    <property type="entry name" value="4-HYDROXY-3-METHYLBUT-2-EN-1-YL DIPHOSPHATE SYNTHASE (FERREDOXIN), CHLOROPLASTIC"/>
    <property type="match status" value="1"/>
</dbReference>
<dbReference type="Pfam" id="PF04551">
    <property type="entry name" value="GcpE"/>
    <property type="match status" value="1"/>
</dbReference>
<dbReference type="PIRSF" id="PIRSF004640">
    <property type="entry name" value="IspG"/>
    <property type="match status" value="1"/>
</dbReference>
<dbReference type="SUPFAM" id="SSF51717">
    <property type="entry name" value="Dihydropteroate synthetase-like"/>
    <property type="match status" value="1"/>
</dbReference>
<dbReference type="SUPFAM" id="SSF56014">
    <property type="entry name" value="Nitrite and sulphite reductase 4Fe-4S domain-like"/>
    <property type="match status" value="1"/>
</dbReference>
<gene>
    <name evidence="1" type="primary">ispG</name>
    <name type="ordered locus">BCG9842_B0840</name>
</gene>
<comment type="function">
    <text evidence="1">Converts 2C-methyl-D-erythritol 2,4-cyclodiphosphate (ME-2,4cPP) into 1-hydroxy-2-methyl-2-(E)-butenyl 4-diphosphate.</text>
</comment>
<comment type="catalytic activity">
    <reaction evidence="1">
        <text>(2E)-4-hydroxy-3-methylbut-2-enyl diphosphate + oxidized [flavodoxin] + H2O + 2 H(+) = 2-C-methyl-D-erythritol 2,4-cyclic diphosphate + reduced [flavodoxin]</text>
        <dbReference type="Rhea" id="RHEA:43604"/>
        <dbReference type="Rhea" id="RHEA-COMP:10622"/>
        <dbReference type="Rhea" id="RHEA-COMP:10623"/>
        <dbReference type="ChEBI" id="CHEBI:15377"/>
        <dbReference type="ChEBI" id="CHEBI:15378"/>
        <dbReference type="ChEBI" id="CHEBI:57618"/>
        <dbReference type="ChEBI" id="CHEBI:58210"/>
        <dbReference type="ChEBI" id="CHEBI:58483"/>
        <dbReference type="ChEBI" id="CHEBI:128753"/>
        <dbReference type="EC" id="1.17.7.3"/>
    </reaction>
</comment>
<comment type="cofactor">
    <cofactor evidence="1">
        <name>[4Fe-4S] cluster</name>
        <dbReference type="ChEBI" id="CHEBI:49883"/>
    </cofactor>
    <text evidence="1">Binds 1 [4Fe-4S] cluster.</text>
</comment>
<comment type="pathway">
    <text evidence="1">Isoprenoid biosynthesis; isopentenyl diphosphate biosynthesis via DXP pathway; isopentenyl diphosphate from 1-deoxy-D-xylulose 5-phosphate: step 5/6.</text>
</comment>
<comment type="similarity">
    <text evidence="1">Belongs to the IspG family.</text>
</comment>
<organism>
    <name type="scientific">Bacillus cereus (strain G9842)</name>
    <dbReference type="NCBI Taxonomy" id="405531"/>
    <lineage>
        <taxon>Bacteria</taxon>
        <taxon>Bacillati</taxon>
        <taxon>Bacillota</taxon>
        <taxon>Bacilli</taxon>
        <taxon>Bacillales</taxon>
        <taxon>Bacillaceae</taxon>
        <taxon>Bacillus</taxon>
        <taxon>Bacillus cereus group</taxon>
    </lineage>
</organism>